<evidence type="ECO:0000255" key="1">
    <source>
        <dbReference type="HAMAP-Rule" id="MF_00358"/>
    </source>
</evidence>
<evidence type="ECO:0000305" key="2"/>
<comment type="similarity">
    <text evidence="1">Belongs to the bacterial ribosomal protein bS21 family.</text>
</comment>
<name>RS21_OENOB</name>
<feature type="chain" id="PRO_1000005142" description="Small ribosomal subunit protein bS21">
    <location>
        <begin position="1"/>
        <end position="64"/>
    </location>
</feature>
<organism>
    <name type="scientific">Oenococcus oeni (strain ATCC BAA-331 / PSU-1)</name>
    <dbReference type="NCBI Taxonomy" id="203123"/>
    <lineage>
        <taxon>Bacteria</taxon>
        <taxon>Bacillati</taxon>
        <taxon>Bacillota</taxon>
        <taxon>Bacilli</taxon>
        <taxon>Lactobacillales</taxon>
        <taxon>Lactobacillaceae</taxon>
        <taxon>Oenococcus</taxon>
    </lineage>
</organism>
<dbReference type="EMBL" id="CP000411">
    <property type="protein sequence ID" value="ABJ56893.1"/>
    <property type="molecule type" value="Genomic_DNA"/>
</dbReference>
<dbReference type="RefSeq" id="WP_002817109.1">
    <property type="nucleotide sequence ID" value="NC_008528.1"/>
</dbReference>
<dbReference type="SMR" id="Q04F79"/>
<dbReference type="STRING" id="203123.OEOE_0984"/>
<dbReference type="GeneID" id="75065943"/>
<dbReference type="KEGG" id="ooe:OEOE_0984"/>
<dbReference type="eggNOG" id="COG0828">
    <property type="taxonomic scope" value="Bacteria"/>
</dbReference>
<dbReference type="HOGENOM" id="CLU_159258_3_2_9"/>
<dbReference type="Proteomes" id="UP000000774">
    <property type="component" value="Chromosome"/>
</dbReference>
<dbReference type="GO" id="GO:1990904">
    <property type="term" value="C:ribonucleoprotein complex"/>
    <property type="evidence" value="ECO:0007669"/>
    <property type="project" value="UniProtKB-KW"/>
</dbReference>
<dbReference type="GO" id="GO:0005840">
    <property type="term" value="C:ribosome"/>
    <property type="evidence" value="ECO:0007669"/>
    <property type="project" value="UniProtKB-KW"/>
</dbReference>
<dbReference type="GO" id="GO:0003735">
    <property type="term" value="F:structural constituent of ribosome"/>
    <property type="evidence" value="ECO:0007669"/>
    <property type="project" value="InterPro"/>
</dbReference>
<dbReference type="GO" id="GO:0006412">
    <property type="term" value="P:translation"/>
    <property type="evidence" value="ECO:0007669"/>
    <property type="project" value="UniProtKB-UniRule"/>
</dbReference>
<dbReference type="Gene3D" id="1.20.5.1150">
    <property type="entry name" value="Ribosomal protein S8"/>
    <property type="match status" value="1"/>
</dbReference>
<dbReference type="HAMAP" id="MF_00358">
    <property type="entry name" value="Ribosomal_bS21"/>
    <property type="match status" value="1"/>
</dbReference>
<dbReference type="InterPro" id="IPR001911">
    <property type="entry name" value="Ribosomal_bS21"/>
</dbReference>
<dbReference type="InterPro" id="IPR018278">
    <property type="entry name" value="Ribosomal_bS21_CS"/>
</dbReference>
<dbReference type="InterPro" id="IPR038380">
    <property type="entry name" value="Ribosomal_bS21_sf"/>
</dbReference>
<dbReference type="NCBIfam" id="TIGR00030">
    <property type="entry name" value="S21p"/>
    <property type="match status" value="1"/>
</dbReference>
<dbReference type="PANTHER" id="PTHR21109">
    <property type="entry name" value="MITOCHONDRIAL 28S RIBOSOMAL PROTEIN S21"/>
    <property type="match status" value="1"/>
</dbReference>
<dbReference type="PANTHER" id="PTHR21109:SF22">
    <property type="entry name" value="SMALL RIBOSOMAL SUBUNIT PROTEIN BS21"/>
    <property type="match status" value="1"/>
</dbReference>
<dbReference type="Pfam" id="PF01165">
    <property type="entry name" value="Ribosomal_S21"/>
    <property type="match status" value="1"/>
</dbReference>
<dbReference type="PRINTS" id="PR00976">
    <property type="entry name" value="RIBOSOMALS21"/>
</dbReference>
<dbReference type="PROSITE" id="PS01181">
    <property type="entry name" value="RIBOSOMAL_S21"/>
    <property type="match status" value="1"/>
</dbReference>
<reference key="1">
    <citation type="journal article" date="2006" name="Proc. Natl. Acad. Sci. U.S.A.">
        <title>Comparative genomics of the lactic acid bacteria.</title>
        <authorList>
            <person name="Makarova K.S."/>
            <person name="Slesarev A."/>
            <person name="Wolf Y.I."/>
            <person name="Sorokin A."/>
            <person name="Mirkin B."/>
            <person name="Koonin E.V."/>
            <person name="Pavlov A."/>
            <person name="Pavlova N."/>
            <person name="Karamychev V."/>
            <person name="Polouchine N."/>
            <person name="Shakhova V."/>
            <person name="Grigoriev I."/>
            <person name="Lou Y."/>
            <person name="Rohksar D."/>
            <person name="Lucas S."/>
            <person name="Huang K."/>
            <person name="Goodstein D.M."/>
            <person name="Hawkins T."/>
            <person name="Plengvidhya V."/>
            <person name="Welker D."/>
            <person name="Hughes J."/>
            <person name="Goh Y."/>
            <person name="Benson A."/>
            <person name="Baldwin K."/>
            <person name="Lee J.-H."/>
            <person name="Diaz-Muniz I."/>
            <person name="Dosti B."/>
            <person name="Smeianov V."/>
            <person name="Wechter W."/>
            <person name="Barabote R."/>
            <person name="Lorca G."/>
            <person name="Altermann E."/>
            <person name="Barrangou R."/>
            <person name="Ganesan B."/>
            <person name="Xie Y."/>
            <person name="Rawsthorne H."/>
            <person name="Tamir D."/>
            <person name="Parker C."/>
            <person name="Breidt F."/>
            <person name="Broadbent J.R."/>
            <person name="Hutkins R."/>
            <person name="O'Sullivan D."/>
            <person name="Steele J."/>
            <person name="Unlu G."/>
            <person name="Saier M.H. Jr."/>
            <person name="Klaenhammer T."/>
            <person name="Richardson P."/>
            <person name="Kozyavkin S."/>
            <person name="Weimer B.C."/>
            <person name="Mills D.A."/>
        </authorList>
    </citation>
    <scope>NUCLEOTIDE SEQUENCE [LARGE SCALE GENOMIC DNA]</scope>
    <source>
        <strain>ATCC BAA-331 / PSU-1</strain>
    </source>
</reference>
<proteinExistence type="inferred from homology"/>
<gene>
    <name evidence="1" type="primary">rpsU</name>
    <name type="ordered locus">OEOE_0984</name>
</gene>
<accession>Q04F79</accession>
<keyword id="KW-1185">Reference proteome</keyword>
<keyword id="KW-0687">Ribonucleoprotein</keyword>
<keyword id="KW-0689">Ribosomal protein</keyword>
<sequence length="64" mass="7524">MASIIVRHNESFDDALRRFKRGVAKDGTLQEVRKREFYVKPSVARKLKSEAAQKRARKRARNDH</sequence>
<protein>
    <recommendedName>
        <fullName evidence="1">Small ribosomal subunit protein bS21</fullName>
    </recommendedName>
    <alternativeName>
        <fullName evidence="2">30S ribosomal protein S21</fullName>
    </alternativeName>
</protein>